<dbReference type="EC" id="6.3.5.7" evidence="1"/>
<dbReference type="EMBL" id="CP000239">
    <property type="protein sequence ID" value="ABC99588.1"/>
    <property type="molecule type" value="Genomic_DNA"/>
</dbReference>
<dbReference type="RefSeq" id="WP_011430266.1">
    <property type="nucleotide sequence ID" value="NC_007775.1"/>
</dbReference>
<dbReference type="SMR" id="Q2JUM6"/>
<dbReference type="STRING" id="321327.CYA_1419"/>
<dbReference type="KEGG" id="cya:CYA_1419"/>
<dbReference type="eggNOG" id="COG0154">
    <property type="taxonomic scope" value="Bacteria"/>
</dbReference>
<dbReference type="HOGENOM" id="CLU_009600_0_3_3"/>
<dbReference type="OrthoDB" id="9811471at2"/>
<dbReference type="Proteomes" id="UP000008818">
    <property type="component" value="Chromosome"/>
</dbReference>
<dbReference type="GO" id="GO:0030956">
    <property type="term" value="C:glutamyl-tRNA(Gln) amidotransferase complex"/>
    <property type="evidence" value="ECO:0007669"/>
    <property type="project" value="InterPro"/>
</dbReference>
<dbReference type="GO" id="GO:0005524">
    <property type="term" value="F:ATP binding"/>
    <property type="evidence" value="ECO:0007669"/>
    <property type="project" value="UniProtKB-KW"/>
</dbReference>
<dbReference type="GO" id="GO:0050567">
    <property type="term" value="F:glutaminyl-tRNA synthase (glutamine-hydrolyzing) activity"/>
    <property type="evidence" value="ECO:0007669"/>
    <property type="project" value="UniProtKB-UniRule"/>
</dbReference>
<dbReference type="GO" id="GO:0006412">
    <property type="term" value="P:translation"/>
    <property type="evidence" value="ECO:0007669"/>
    <property type="project" value="UniProtKB-UniRule"/>
</dbReference>
<dbReference type="Gene3D" id="3.90.1300.10">
    <property type="entry name" value="Amidase signature (AS) domain"/>
    <property type="match status" value="1"/>
</dbReference>
<dbReference type="HAMAP" id="MF_00120">
    <property type="entry name" value="GatA"/>
    <property type="match status" value="1"/>
</dbReference>
<dbReference type="InterPro" id="IPR000120">
    <property type="entry name" value="Amidase"/>
</dbReference>
<dbReference type="InterPro" id="IPR020556">
    <property type="entry name" value="Amidase_CS"/>
</dbReference>
<dbReference type="InterPro" id="IPR023631">
    <property type="entry name" value="Amidase_dom"/>
</dbReference>
<dbReference type="InterPro" id="IPR036928">
    <property type="entry name" value="AS_sf"/>
</dbReference>
<dbReference type="InterPro" id="IPR004412">
    <property type="entry name" value="GatA"/>
</dbReference>
<dbReference type="NCBIfam" id="TIGR00132">
    <property type="entry name" value="gatA"/>
    <property type="match status" value="1"/>
</dbReference>
<dbReference type="PANTHER" id="PTHR11895:SF151">
    <property type="entry name" value="GLUTAMYL-TRNA(GLN) AMIDOTRANSFERASE SUBUNIT A"/>
    <property type="match status" value="1"/>
</dbReference>
<dbReference type="PANTHER" id="PTHR11895">
    <property type="entry name" value="TRANSAMIDASE"/>
    <property type="match status" value="1"/>
</dbReference>
<dbReference type="Pfam" id="PF01425">
    <property type="entry name" value="Amidase"/>
    <property type="match status" value="1"/>
</dbReference>
<dbReference type="PIRSF" id="PIRSF001221">
    <property type="entry name" value="Amidase_fungi"/>
    <property type="match status" value="1"/>
</dbReference>
<dbReference type="SUPFAM" id="SSF75304">
    <property type="entry name" value="Amidase signature (AS) enzymes"/>
    <property type="match status" value="1"/>
</dbReference>
<dbReference type="PROSITE" id="PS00571">
    <property type="entry name" value="AMIDASES"/>
    <property type="match status" value="1"/>
</dbReference>
<protein>
    <recommendedName>
        <fullName evidence="1">Glutamyl-tRNA(Gln) amidotransferase subunit A</fullName>
        <shortName evidence="1">Glu-ADT subunit A</shortName>
        <ecNumber evidence="1">6.3.5.7</ecNumber>
    </recommendedName>
</protein>
<sequence length="509" mass="54662">MSVIRALHRQLVTKERSAEEIAREYLERLAQLEPQLKSFITVTEELALQQAKAVDARIRAGEEIGPLAGIPLAVKDNLCTQGIRTTCASRMLEGFIPPYESTVTARLAAAGMVTVGKTNLDEFAMGSSTENSAFQRTANPWDLTRVPGGSSGGSAAAVAADQAVVALGSDTGGSIRQPAAFCGVVGLKPTYGLVSRYGLVAFASSLDQVGPFGRTVEDVALLLQGIAGHDPLDSTSLKVEIPDYSQALIPEIKGFKIGVIRDLLGEGCGEETRAAVQAAIQHLEELGAEILEIDCPSFRYGLATYYIIAPSEASSNLARYDGVKYGLREPADSLLAMYGKTRARGFGPEVKRRIMIGTYALSAGYYDAYYLKAQKVRTLIKQDFLRAFEKVDVLVSPTTPTPAFKAGEREDPLSMYLCDLMTIPVNLAGLPGLSLPCGFANGLPIGLQIIGNVLQESKVLRVAYAYEQSTDWHKRRPPLGQPPLEQAQGTAQQPKAKSKSTKGSKKSKS</sequence>
<accession>Q2JUM6</accession>
<organism>
    <name type="scientific">Synechococcus sp. (strain JA-3-3Ab)</name>
    <name type="common">Cyanobacteria bacterium Yellowstone A-Prime</name>
    <dbReference type="NCBI Taxonomy" id="321327"/>
    <lineage>
        <taxon>Bacteria</taxon>
        <taxon>Bacillati</taxon>
        <taxon>Cyanobacteriota</taxon>
        <taxon>Cyanophyceae</taxon>
        <taxon>Synechococcales</taxon>
        <taxon>Synechococcaceae</taxon>
        <taxon>Synechococcus</taxon>
    </lineage>
</organism>
<proteinExistence type="inferred from homology"/>
<comment type="function">
    <text evidence="1">Allows the formation of correctly charged Gln-tRNA(Gln) through the transamidation of misacylated Glu-tRNA(Gln) in organisms which lack glutaminyl-tRNA synthetase. The reaction takes place in the presence of glutamine and ATP through an activated gamma-phospho-Glu-tRNA(Gln).</text>
</comment>
<comment type="catalytic activity">
    <reaction evidence="1">
        <text>L-glutamyl-tRNA(Gln) + L-glutamine + ATP + H2O = L-glutaminyl-tRNA(Gln) + L-glutamate + ADP + phosphate + H(+)</text>
        <dbReference type="Rhea" id="RHEA:17521"/>
        <dbReference type="Rhea" id="RHEA-COMP:9681"/>
        <dbReference type="Rhea" id="RHEA-COMP:9684"/>
        <dbReference type="ChEBI" id="CHEBI:15377"/>
        <dbReference type="ChEBI" id="CHEBI:15378"/>
        <dbReference type="ChEBI" id="CHEBI:29985"/>
        <dbReference type="ChEBI" id="CHEBI:30616"/>
        <dbReference type="ChEBI" id="CHEBI:43474"/>
        <dbReference type="ChEBI" id="CHEBI:58359"/>
        <dbReference type="ChEBI" id="CHEBI:78520"/>
        <dbReference type="ChEBI" id="CHEBI:78521"/>
        <dbReference type="ChEBI" id="CHEBI:456216"/>
        <dbReference type="EC" id="6.3.5.7"/>
    </reaction>
</comment>
<comment type="subunit">
    <text evidence="1">Heterotrimer of A, B and C subunits.</text>
</comment>
<comment type="similarity">
    <text evidence="1">Belongs to the amidase family. GatA subfamily.</text>
</comment>
<feature type="chain" id="PRO_0000241164" description="Glutamyl-tRNA(Gln) amidotransferase subunit A">
    <location>
        <begin position="1"/>
        <end position="509"/>
    </location>
</feature>
<feature type="region of interest" description="Disordered" evidence="2">
    <location>
        <begin position="471"/>
        <end position="509"/>
    </location>
</feature>
<feature type="compositionally biased region" description="Basic residues" evidence="2">
    <location>
        <begin position="496"/>
        <end position="509"/>
    </location>
</feature>
<feature type="active site" description="Charge relay system" evidence="1">
    <location>
        <position position="75"/>
    </location>
</feature>
<feature type="active site" description="Charge relay system" evidence="1">
    <location>
        <position position="150"/>
    </location>
</feature>
<feature type="active site" description="Acyl-ester intermediate" evidence="1">
    <location>
        <position position="174"/>
    </location>
</feature>
<name>GATA_SYNJA</name>
<evidence type="ECO:0000255" key="1">
    <source>
        <dbReference type="HAMAP-Rule" id="MF_00120"/>
    </source>
</evidence>
<evidence type="ECO:0000256" key="2">
    <source>
        <dbReference type="SAM" id="MobiDB-lite"/>
    </source>
</evidence>
<gene>
    <name evidence="1" type="primary">gatA</name>
    <name type="ordered locus">CYA_1419</name>
</gene>
<reference key="1">
    <citation type="journal article" date="2007" name="ISME J.">
        <title>Population level functional diversity in a microbial community revealed by comparative genomic and metagenomic analyses.</title>
        <authorList>
            <person name="Bhaya D."/>
            <person name="Grossman A.R."/>
            <person name="Steunou A.-S."/>
            <person name="Khuri N."/>
            <person name="Cohan F.M."/>
            <person name="Hamamura N."/>
            <person name="Melendrez M.C."/>
            <person name="Bateson M.M."/>
            <person name="Ward D.M."/>
            <person name="Heidelberg J.F."/>
        </authorList>
    </citation>
    <scope>NUCLEOTIDE SEQUENCE [LARGE SCALE GENOMIC DNA]</scope>
    <source>
        <strain>JA-3-3Ab</strain>
    </source>
</reference>
<keyword id="KW-0067">ATP-binding</keyword>
<keyword id="KW-0436">Ligase</keyword>
<keyword id="KW-0547">Nucleotide-binding</keyword>
<keyword id="KW-0648">Protein biosynthesis</keyword>